<keyword id="KW-1017">Isopeptide bond</keyword>
<keyword id="KW-0472">Membrane</keyword>
<keyword id="KW-0597">Phosphoprotein</keyword>
<keyword id="KW-0812">Transmembrane</keyword>
<keyword id="KW-1133">Transmembrane helix</keyword>
<keyword id="KW-0832">Ubl conjugation</keyword>
<comment type="subcellular location">
    <subcellularLocation>
        <location evidence="4">Membrane</location>
        <topology evidence="4">Single-pass membrane protein</topology>
    </subcellularLocation>
</comment>
<comment type="similarity">
    <text evidence="4">Belongs to the PRM5 family.</text>
</comment>
<accession>B5VKJ2</accession>
<sequence>MTVITIAKRGLPKLTTSTSSTTTASSSSTITSVASSSSSLPLLSNSTSSSIIPSITPPSRNGNPYILDSGDMPNGTVFIVVGGIAGVIFLAILLWWVITTYSSHRLTRSVQDYESKMFSTQHTQFYGDSPYMDYPAKENFQDQVHISESDISPGNKDESVKDALVSHTNNEKPFLSNFERPLSSLVSESNRNSLFISPTGDILYKTRLSKLYQESPRLLQKPVIMTSDNVSTNSLVSTISSSSASSLDNGNEKEVGEDIRKPAKIASSPSRKLLNSPESDGSVNRNHSKGNLLVVQSKRKPTPSTYLEHMLEGKEQDE</sequence>
<evidence type="ECO:0000250" key="1">
    <source>
        <dbReference type="UniProtKB" id="P40476"/>
    </source>
</evidence>
<evidence type="ECO:0000255" key="2"/>
<evidence type="ECO:0000256" key="3">
    <source>
        <dbReference type="SAM" id="MobiDB-lite"/>
    </source>
</evidence>
<evidence type="ECO:0000305" key="4"/>
<name>PRM5_YEAS6</name>
<proteinExistence type="inferred from homology"/>
<gene>
    <name type="primary">PRM5</name>
    <name type="ORF">AWRI1631_90510</name>
</gene>
<dbReference type="EMBL" id="ABSV01001190">
    <property type="protein sequence ID" value="EDZ71548.1"/>
    <property type="molecule type" value="Genomic_DNA"/>
</dbReference>
<dbReference type="Proteomes" id="UP000008988">
    <property type="component" value="Unassembled WGS sequence"/>
</dbReference>
<dbReference type="GO" id="GO:0005935">
    <property type="term" value="C:cellular bud neck"/>
    <property type="evidence" value="ECO:0007669"/>
    <property type="project" value="TreeGrafter"/>
</dbReference>
<dbReference type="GO" id="GO:0000324">
    <property type="term" value="C:fungal-type vacuole"/>
    <property type="evidence" value="ECO:0007669"/>
    <property type="project" value="TreeGrafter"/>
</dbReference>
<dbReference type="GO" id="GO:0016020">
    <property type="term" value="C:membrane"/>
    <property type="evidence" value="ECO:0007669"/>
    <property type="project" value="UniProtKB-SubCell"/>
</dbReference>
<dbReference type="InterPro" id="IPR051009">
    <property type="entry name" value="PRM"/>
</dbReference>
<dbReference type="PANTHER" id="PTHR36089">
    <property type="entry name" value="CHITIN SYNTHASE 3 COMPLEX PROTEIN CSI2-RELATED"/>
    <property type="match status" value="1"/>
</dbReference>
<dbReference type="PANTHER" id="PTHR36089:SF1">
    <property type="entry name" value="CHITIN SYNTHASE 3 COMPLEX PROTEIN CSI2-RELATED"/>
    <property type="match status" value="1"/>
</dbReference>
<reference key="1">
    <citation type="journal article" date="2008" name="FEMS Yeast Res.">
        <title>Comparative genome analysis of a Saccharomyces cerevisiae wine strain.</title>
        <authorList>
            <person name="Borneman A.R."/>
            <person name="Forgan A.H."/>
            <person name="Pretorius I.S."/>
            <person name="Chambers P.J."/>
        </authorList>
    </citation>
    <scope>NUCLEOTIDE SEQUENCE [LARGE SCALE GENOMIC DNA]</scope>
    <source>
        <strain>AWRI1631</strain>
    </source>
</reference>
<feature type="chain" id="PRO_0000409311" description="Pheromone-regulated membrane protein 5">
    <location>
        <begin position="1"/>
        <end position="318"/>
    </location>
</feature>
<feature type="transmembrane region" description="Helical" evidence="2">
    <location>
        <begin position="78"/>
        <end position="98"/>
    </location>
</feature>
<feature type="region of interest" description="Disordered" evidence="3">
    <location>
        <begin position="238"/>
        <end position="318"/>
    </location>
</feature>
<feature type="compositionally biased region" description="Low complexity" evidence="3">
    <location>
        <begin position="238"/>
        <end position="247"/>
    </location>
</feature>
<feature type="compositionally biased region" description="Basic and acidic residues" evidence="3">
    <location>
        <begin position="250"/>
        <end position="261"/>
    </location>
</feature>
<feature type="compositionally biased region" description="Polar residues" evidence="3">
    <location>
        <begin position="276"/>
        <end position="285"/>
    </location>
</feature>
<feature type="compositionally biased region" description="Basic and acidic residues" evidence="3">
    <location>
        <begin position="309"/>
        <end position="318"/>
    </location>
</feature>
<feature type="modified residue" description="Phosphoserine" evidence="1">
    <location>
        <position position="129"/>
    </location>
</feature>
<feature type="modified residue" description="Phosphoserine" evidence="1">
    <location>
        <position position="279"/>
    </location>
</feature>
<feature type="modified residue" description="Phosphoserine" evidence="1">
    <location>
        <position position="282"/>
    </location>
</feature>
<feature type="modified residue" description="Phosphoserine" evidence="1">
    <location>
        <position position="288"/>
    </location>
</feature>
<feature type="cross-link" description="Glycyl lysine isopeptide (Lys-Gly) (interchain with G-Cter in ubiquitin)" evidence="1">
    <location>
        <position position="314"/>
    </location>
</feature>
<organism>
    <name type="scientific">Saccharomyces cerevisiae (strain AWRI1631)</name>
    <name type="common">Baker's yeast</name>
    <dbReference type="NCBI Taxonomy" id="545124"/>
    <lineage>
        <taxon>Eukaryota</taxon>
        <taxon>Fungi</taxon>
        <taxon>Dikarya</taxon>
        <taxon>Ascomycota</taxon>
        <taxon>Saccharomycotina</taxon>
        <taxon>Saccharomycetes</taxon>
        <taxon>Saccharomycetales</taxon>
        <taxon>Saccharomycetaceae</taxon>
        <taxon>Saccharomyces</taxon>
    </lineage>
</organism>
<protein>
    <recommendedName>
        <fullName>Pheromone-regulated membrane protein 5</fullName>
    </recommendedName>
</protein>